<protein>
    <recommendedName>
        <fullName evidence="1">Small ribosomal subunit protein uS4</fullName>
    </recommendedName>
    <alternativeName>
        <fullName evidence="3">30S ribosomal protein S4</fullName>
    </alternativeName>
</protein>
<keyword id="KW-1185">Reference proteome</keyword>
<keyword id="KW-0687">Ribonucleoprotein</keyword>
<keyword id="KW-0689">Ribosomal protein</keyword>
<keyword id="KW-0694">RNA-binding</keyword>
<keyword id="KW-0699">rRNA-binding</keyword>
<proteinExistence type="inferred from homology"/>
<feature type="chain" id="PRO_0000293355" description="Small ribosomal subunit protein uS4">
    <location>
        <begin position="1"/>
        <end position="205"/>
    </location>
</feature>
<feature type="domain" description="S4 RNA-binding" evidence="1">
    <location>
        <begin position="94"/>
        <end position="157"/>
    </location>
</feature>
<feature type="region of interest" description="Disordered" evidence="2">
    <location>
        <begin position="18"/>
        <end position="46"/>
    </location>
</feature>
<reference key="1">
    <citation type="submission" date="2006-01" db="EMBL/GenBank/DDBJ databases">
        <title>Complete sequence of Rhodopseudomonas palustris HaA2.</title>
        <authorList>
            <consortium name="US DOE Joint Genome Institute"/>
            <person name="Copeland A."/>
            <person name="Lucas S."/>
            <person name="Lapidus A."/>
            <person name="Barry K."/>
            <person name="Detter J.C."/>
            <person name="Glavina T."/>
            <person name="Hammon N."/>
            <person name="Israni S."/>
            <person name="Pitluck S."/>
            <person name="Chain P."/>
            <person name="Malfatti S."/>
            <person name="Shin M."/>
            <person name="Vergez L."/>
            <person name="Schmutz J."/>
            <person name="Larimer F."/>
            <person name="Land M."/>
            <person name="Hauser L."/>
            <person name="Pelletier D.A."/>
            <person name="Kyrpides N."/>
            <person name="Anderson I."/>
            <person name="Oda Y."/>
            <person name="Harwood C.S."/>
            <person name="Richardson P."/>
        </authorList>
    </citation>
    <scope>NUCLEOTIDE SEQUENCE [LARGE SCALE GENOMIC DNA]</scope>
    <source>
        <strain>HaA2</strain>
    </source>
</reference>
<evidence type="ECO:0000255" key="1">
    <source>
        <dbReference type="HAMAP-Rule" id="MF_01306"/>
    </source>
</evidence>
<evidence type="ECO:0000256" key="2">
    <source>
        <dbReference type="SAM" id="MobiDB-lite"/>
    </source>
</evidence>
<evidence type="ECO:0000305" key="3"/>
<name>RS4_RHOP2</name>
<gene>
    <name evidence="1" type="primary">rpsD</name>
    <name type="ordered locus">RPB_3699</name>
</gene>
<organism>
    <name type="scientific">Rhodopseudomonas palustris (strain HaA2)</name>
    <dbReference type="NCBI Taxonomy" id="316058"/>
    <lineage>
        <taxon>Bacteria</taxon>
        <taxon>Pseudomonadati</taxon>
        <taxon>Pseudomonadota</taxon>
        <taxon>Alphaproteobacteria</taxon>
        <taxon>Hyphomicrobiales</taxon>
        <taxon>Nitrobacteraceae</taxon>
        <taxon>Rhodopseudomonas</taxon>
    </lineage>
</organism>
<accession>Q2ITR6</accession>
<comment type="function">
    <text evidence="1">One of the primary rRNA binding proteins, it binds directly to 16S rRNA where it nucleates assembly of the body of the 30S subunit.</text>
</comment>
<comment type="function">
    <text evidence="1">With S5 and S12 plays an important role in translational accuracy.</text>
</comment>
<comment type="subunit">
    <text evidence="1">Part of the 30S ribosomal subunit. Contacts protein S5. The interaction surface between S4 and S5 is involved in control of translational fidelity.</text>
</comment>
<comment type="similarity">
    <text evidence="1">Belongs to the universal ribosomal protein uS4 family.</text>
</comment>
<sequence>MTKRSEAKYKIDRRMGQNIWGRPKSPVNRREYGPGQHGQRRKGKLSDFGVQLRAKQKLKGYYANISERQFHSIYVEATRLKGDSGENLIGLLERRLDTVVYRAKFVSTMFAARQFINHGHIKVNGKRVNISSYKVRVGDLIEVKESSKQLAFVLEASQLAERDVPDYIEVDHNKMTAKFGRIPALTDVPFAVQMEPHLIVEFYSR</sequence>
<dbReference type="EMBL" id="CP000250">
    <property type="protein sequence ID" value="ABD08394.1"/>
    <property type="molecule type" value="Genomic_DNA"/>
</dbReference>
<dbReference type="RefSeq" id="WP_011442578.1">
    <property type="nucleotide sequence ID" value="NC_007778.1"/>
</dbReference>
<dbReference type="SMR" id="Q2ITR6"/>
<dbReference type="STRING" id="316058.RPB_3699"/>
<dbReference type="KEGG" id="rpb:RPB_3699"/>
<dbReference type="eggNOG" id="COG0522">
    <property type="taxonomic scope" value="Bacteria"/>
</dbReference>
<dbReference type="HOGENOM" id="CLU_092403_0_0_5"/>
<dbReference type="OrthoDB" id="9803672at2"/>
<dbReference type="Proteomes" id="UP000008809">
    <property type="component" value="Chromosome"/>
</dbReference>
<dbReference type="GO" id="GO:0015935">
    <property type="term" value="C:small ribosomal subunit"/>
    <property type="evidence" value="ECO:0007669"/>
    <property type="project" value="InterPro"/>
</dbReference>
<dbReference type="GO" id="GO:0019843">
    <property type="term" value="F:rRNA binding"/>
    <property type="evidence" value="ECO:0007669"/>
    <property type="project" value="UniProtKB-UniRule"/>
</dbReference>
<dbReference type="GO" id="GO:0003735">
    <property type="term" value="F:structural constituent of ribosome"/>
    <property type="evidence" value="ECO:0007669"/>
    <property type="project" value="InterPro"/>
</dbReference>
<dbReference type="GO" id="GO:0042274">
    <property type="term" value="P:ribosomal small subunit biogenesis"/>
    <property type="evidence" value="ECO:0007669"/>
    <property type="project" value="TreeGrafter"/>
</dbReference>
<dbReference type="GO" id="GO:0006412">
    <property type="term" value="P:translation"/>
    <property type="evidence" value="ECO:0007669"/>
    <property type="project" value="UniProtKB-UniRule"/>
</dbReference>
<dbReference type="CDD" id="cd00165">
    <property type="entry name" value="S4"/>
    <property type="match status" value="1"/>
</dbReference>
<dbReference type="FunFam" id="3.10.290.10:FF:000001">
    <property type="entry name" value="30S ribosomal protein S4"/>
    <property type="match status" value="1"/>
</dbReference>
<dbReference type="Gene3D" id="1.10.1050.10">
    <property type="entry name" value="Ribosomal Protein S4 Delta 41, Chain A, domain 1"/>
    <property type="match status" value="1"/>
</dbReference>
<dbReference type="Gene3D" id="3.10.290.10">
    <property type="entry name" value="RNA-binding S4 domain"/>
    <property type="match status" value="1"/>
</dbReference>
<dbReference type="HAMAP" id="MF_01306_B">
    <property type="entry name" value="Ribosomal_uS4_B"/>
    <property type="match status" value="1"/>
</dbReference>
<dbReference type="InterPro" id="IPR022801">
    <property type="entry name" value="Ribosomal_uS4"/>
</dbReference>
<dbReference type="InterPro" id="IPR005709">
    <property type="entry name" value="Ribosomal_uS4_bac-type"/>
</dbReference>
<dbReference type="InterPro" id="IPR018079">
    <property type="entry name" value="Ribosomal_uS4_CS"/>
</dbReference>
<dbReference type="InterPro" id="IPR001912">
    <property type="entry name" value="Ribosomal_uS4_N"/>
</dbReference>
<dbReference type="InterPro" id="IPR002942">
    <property type="entry name" value="S4_RNA-bd"/>
</dbReference>
<dbReference type="InterPro" id="IPR036986">
    <property type="entry name" value="S4_RNA-bd_sf"/>
</dbReference>
<dbReference type="NCBIfam" id="NF003717">
    <property type="entry name" value="PRK05327.1"/>
    <property type="match status" value="1"/>
</dbReference>
<dbReference type="NCBIfam" id="TIGR01017">
    <property type="entry name" value="rpsD_bact"/>
    <property type="match status" value="1"/>
</dbReference>
<dbReference type="PANTHER" id="PTHR11831">
    <property type="entry name" value="30S 40S RIBOSOMAL PROTEIN"/>
    <property type="match status" value="1"/>
</dbReference>
<dbReference type="PANTHER" id="PTHR11831:SF4">
    <property type="entry name" value="SMALL RIBOSOMAL SUBUNIT PROTEIN US4M"/>
    <property type="match status" value="1"/>
</dbReference>
<dbReference type="Pfam" id="PF00163">
    <property type="entry name" value="Ribosomal_S4"/>
    <property type="match status" value="1"/>
</dbReference>
<dbReference type="Pfam" id="PF01479">
    <property type="entry name" value="S4"/>
    <property type="match status" value="1"/>
</dbReference>
<dbReference type="SMART" id="SM01390">
    <property type="entry name" value="Ribosomal_S4"/>
    <property type="match status" value="1"/>
</dbReference>
<dbReference type="SMART" id="SM00363">
    <property type="entry name" value="S4"/>
    <property type="match status" value="1"/>
</dbReference>
<dbReference type="SUPFAM" id="SSF55174">
    <property type="entry name" value="Alpha-L RNA-binding motif"/>
    <property type="match status" value="1"/>
</dbReference>
<dbReference type="PROSITE" id="PS00632">
    <property type="entry name" value="RIBOSOMAL_S4"/>
    <property type="match status" value="1"/>
</dbReference>
<dbReference type="PROSITE" id="PS50889">
    <property type="entry name" value="S4"/>
    <property type="match status" value="1"/>
</dbReference>